<organism>
    <name type="scientific">Salmonella paratyphi C (strain RKS4594)</name>
    <dbReference type="NCBI Taxonomy" id="476213"/>
    <lineage>
        <taxon>Bacteria</taxon>
        <taxon>Pseudomonadati</taxon>
        <taxon>Pseudomonadota</taxon>
        <taxon>Gammaproteobacteria</taxon>
        <taxon>Enterobacterales</taxon>
        <taxon>Enterobacteriaceae</taxon>
        <taxon>Salmonella</taxon>
    </lineage>
</organism>
<comment type="function">
    <text evidence="1">Zinc transporter. Acts as a Zn(2+):proton symporter, which likely mediates zinc ion uptake.</text>
</comment>
<comment type="catalytic activity">
    <reaction evidence="1">
        <text>Zn(2+)(out) + H(+)(out) = Zn(2+)(in) + H(+)(in)</text>
        <dbReference type="Rhea" id="RHEA:71195"/>
        <dbReference type="ChEBI" id="CHEBI:15378"/>
        <dbReference type="ChEBI" id="CHEBI:29105"/>
    </reaction>
    <physiologicalReaction direction="left-to-right" evidence="1">
        <dbReference type="Rhea" id="RHEA:71196"/>
    </physiologicalReaction>
</comment>
<comment type="subcellular location">
    <subcellularLocation>
        <location evidence="1">Cell inner membrane</location>
        <topology evidence="1">Multi-pass membrane protein</topology>
    </subcellularLocation>
</comment>
<comment type="similarity">
    <text evidence="1">Belongs to the CorA metal ion transporter (MIT) (TC 1.A.35) family.</text>
</comment>
<reference key="1">
    <citation type="journal article" date="2009" name="PLoS ONE">
        <title>Salmonella paratyphi C: genetic divergence from Salmonella choleraesuis and pathogenic convergence with Salmonella typhi.</title>
        <authorList>
            <person name="Liu W.-Q."/>
            <person name="Feng Y."/>
            <person name="Wang Y."/>
            <person name="Zou Q.-H."/>
            <person name="Chen F."/>
            <person name="Guo J.-T."/>
            <person name="Peng Y.-H."/>
            <person name="Jin Y."/>
            <person name="Li Y.-G."/>
            <person name="Hu S.-N."/>
            <person name="Johnston R.N."/>
            <person name="Liu G.-R."/>
            <person name="Liu S.-L."/>
        </authorList>
    </citation>
    <scope>NUCLEOTIDE SEQUENCE [LARGE SCALE GENOMIC DNA]</scope>
    <source>
        <strain>RKS4594</strain>
    </source>
</reference>
<name>ZNTB_SALPC</name>
<gene>
    <name evidence="1" type="primary">zntB</name>
    <name type="ordered locus">SPC_2078</name>
</gene>
<dbReference type="EMBL" id="CP000857">
    <property type="protein sequence ID" value="ACN46209.1"/>
    <property type="molecule type" value="Genomic_DNA"/>
</dbReference>
<dbReference type="RefSeq" id="WP_000387365.1">
    <property type="nucleotide sequence ID" value="NC_012125.1"/>
</dbReference>
<dbReference type="SMR" id="C0Q3V4"/>
<dbReference type="KEGG" id="sei:SPC_2078"/>
<dbReference type="HOGENOM" id="CLU_007127_2_0_6"/>
<dbReference type="Proteomes" id="UP000001599">
    <property type="component" value="Chromosome"/>
</dbReference>
<dbReference type="GO" id="GO:0005886">
    <property type="term" value="C:plasma membrane"/>
    <property type="evidence" value="ECO:0007669"/>
    <property type="project" value="UniProtKB-SubCell"/>
</dbReference>
<dbReference type="GO" id="GO:0050897">
    <property type="term" value="F:cobalt ion binding"/>
    <property type="evidence" value="ECO:0007669"/>
    <property type="project" value="TreeGrafter"/>
</dbReference>
<dbReference type="GO" id="GO:0015087">
    <property type="term" value="F:cobalt ion transmembrane transporter activity"/>
    <property type="evidence" value="ECO:0007669"/>
    <property type="project" value="TreeGrafter"/>
</dbReference>
<dbReference type="GO" id="GO:0000287">
    <property type="term" value="F:magnesium ion binding"/>
    <property type="evidence" value="ECO:0007669"/>
    <property type="project" value="TreeGrafter"/>
</dbReference>
<dbReference type="GO" id="GO:0015095">
    <property type="term" value="F:magnesium ion transmembrane transporter activity"/>
    <property type="evidence" value="ECO:0007669"/>
    <property type="project" value="TreeGrafter"/>
</dbReference>
<dbReference type="GO" id="GO:0005385">
    <property type="term" value="F:zinc ion transmembrane transporter activity"/>
    <property type="evidence" value="ECO:0007669"/>
    <property type="project" value="UniProtKB-UniRule"/>
</dbReference>
<dbReference type="CDD" id="cd12833">
    <property type="entry name" value="ZntB-like_1"/>
    <property type="match status" value="1"/>
</dbReference>
<dbReference type="FunFam" id="1.20.58.340:FF:000002">
    <property type="entry name" value="Zinc transport protein ZntB"/>
    <property type="match status" value="1"/>
</dbReference>
<dbReference type="FunFam" id="3.30.460.20:FF:000001">
    <property type="entry name" value="Zinc transport protein ZntB"/>
    <property type="match status" value="1"/>
</dbReference>
<dbReference type="Gene3D" id="3.30.460.20">
    <property type="entry name" value="CorA soluble domain-like"/>
    <property type="match status" value="1"/>
</dbReference>
<dbReference type="Gene3D" id="1.20.58.340">
    <property type="entry name" value="Magnesium transport protein CorA, transmembrane region"/>
    <property type="match status" value="2"/>
</dbReference>
<dbReference type="HAMAP" id="MF_01565">
    <property type="entry name" value="ZntB"/>
    <property type="match status" value="1"/>
</dbReference>
<dbReference type="InterPro" id="IPR045861">
    <property type="entry name" value="CorA_cytoplasmic_dom"/>
</dbReference>
<dbReference type="InterPro" id="IPR045863">
    <property type="entry name" value="CorA_TM1_TM2"/>
</dbReference>
<dbReference type="InterPro" id="IPR002523">
    <property type="entry name" value="MgTranspt_CorA/ZnTranspt_ZntB"/>
</dbReference>
<dbReference type="InterPro" id="IPR023714">
    <property type="entry name" value="Zn_transp_ZntB"/>
</dbReference>
<dbReference type="NCBIfam" id="NF007092">
    <property type="entry name" value="PRK09546.1"/>
    <property type="match status" value="1"/>
</dbReference>
<dbReference type="PANTHER" id="PTHR46494">
    <property type="entry name" value="CORA FAMILY METAL ION TRANSPORTER (EUROFUNG)"/>
    <property type="match status" value="1"/>
</dbReference>
<dbReference type="PANTHER" id="PTHR46494:SF3">
    <property type="entry name" value="ZINC TRANSPORT PROTEIN ZNTB"/>
    <property type="match status" value="1"/>
</dbReference>
<dbReference type="Pfam" id="PF01544">
    <property type="entry name" value="CorA"/>
    <property type="match status" value="1"/>
</dbReference>
<dbReference type="SUPFAM" id="SSF143865">
    <property type="entry name" value="CorA soluble domain-like"/>
    <property type="match status" value="1"/>
</dbReference>
<dbReference type="SUPFAM" id="SSF144083">
    <property type="entry name" value="Magnesium transport protein CorA, transmembrane region"/>
    <property type="match status" value="1"/>
</dbReference>
<accession>C0Q3V4</accession>
<keyword id="KW-0997">Cell inner membrane</keyword>
<keyword id="KW-1003">Cell membrane</keyword>
<keyword id="KW-0406">Ion transport</keyword>
<keyword id="KW-0472">Membrane</keyword>
<keyword id="KW-0812">Transmembrane</keyword>
<keyword id="KW-1133">Transmembrane helix</keyword>
<keyword id="KW-0813">Transport</keyword>
<keyword id="KW-0862">Zinc</keyword>
<protein>
    <recommendedName>
        <fullName evidence="1">Zinc transport protein ZntB</fullName>
    </recommendedName>
</protein>
<evidence type="ECO:0000255" key="1">
    <source>
        <dbReference type="HAMAP-Rule" id="MF_01565"/>
    </source>
</evidence>
<sequence length="327" mass="36740">MEAIKGSDVNVPDAVFAWLLDGHGGVKPLEDNDVIDSQHPCWLHLNYTHPDSARWLASTPLLPNNVRDALAGESSRPRVSRMGEGTLITLRCINGSTDERPDQLVAMRLYMDERFIVSTRQRKVLALDDVVSDLQEGTGPVDCGGWLVDVCDALTDHASEFIEELHDKIIDLEDNLLDQQIPPRGFLALLRKQLIVMRRYMAPQRDVYARLASERLPWMSDDHRRRMQDIADRLGRGLDEIDACIARTGIMADEIAQVMQESLARRTYTMSLMAMVFLPSTFLTGLFGVNLGGIPGGGWRFGFSLFCILLVVLIGGVTLWLHRSKWL</sequence>
<feature type="chain" id="PRO_1000185454" description="Zinc transport protein ZntB">
    <location>
        <begin position="1"/>
        <end position="327"/>
    </location>
</feature>
<feature type="topological domain" description="Cytoplasmic" evidence="1">
    <location>
        <begin position="1"/>
        <end position="273"/>
    </location>
</feature>
<feature type="transmembrane region" description="Helical" evidence="1">
    <location>
        <begin position="274"/>
        <end position="294"/>
    </location>
</feature>
<feature type="topological domain" description="Periplasmic" evidence="1">
    <location>
        <begin position="295"/>
        <end position="300"/>
    </location>
</feature>
<feature type="transmembrane region" description="Helical" evidence="1">
    <location>
        <begin position="301"/>
        <end position="321"/>
    </location>
</feature>
<feature type="topological domain" description="Cytoplasmic" evidence="1">
    <location>
        <begin position="322"/>
        <end position="327"/>
    </location>
</feature>
<proteinExistence type="inferred from homology"/>